<keyword id="KW-0067">ATP-binding</keyword>
<keyword id="KW-0507">mRNA processing</keyword>
<keyword id="KW-0547">Nucleotide-binding</keyword>
<keyword id="KW-0539">Nucleus</keyword>
<keyword id="KW-1185">Reference proteome</keyword>
<accession>B4GGT6</accession>
<gene>
    <name type="primary">cbc</name>
    <name type="ORF">GL17071</name>
</gene>
<evidence type="ECO:0000255" key="1">
    <source>
        <dbReference type="HAMAP-Rule" id="MF_03035"/>
    </source>
</evidence>
<reference key="1">
    <citation type="journal article" date="2007" name="Nature">
        <title>Evolution of genes and genomes on the Drosophila phylogeny.</title>
        <authorList>
            <consortium name="Drosophila 12 genomes consortium"/>
        </authorList>
    </citation>
    <scope>NUCLEOTIDE SEQUENCE [LARGE SCALE GENOMIC DNA]</scope>
    <source>
        <strain>MSH-3 / Tucson 14011-0111.49</strain>
    </source>
</reference>
<proteinExistence type="inferred from homology"/>
<sequence length="425" mass="47093">MSDHQSRGQDFSLEADSELRFEIEQKDAKVLVTLVNGFAELFGTELVKKKKYEFGMGAKVAIFTYQGCVLHVTGKMDVCYISKETPMVQYVNCHAALEQFRTEAEEKDRRGPVAMVVGPTDVGKSTLCRILLNYAVRVGRRPLYADLDVGQGAIAISGNVATILIERPASVEEGFPKTAPLVYHFGHKSPSGNSVLYNAVVSKMAEVTLQSLNGNKRTKSSGIIVNTCGWVKGHGYAHLLHAARAYGACAIFVLDQERLYNELLRDVPSSVHVVLLPKSGGVVERSKELRHECRDQRIKEYFYGNARAPFYPFSFEVKFQELRLYKIGAPPLPDSCMPIGMKAEDNKTKVVAVTPTPALIHHVLALSFAESVDDDVIGTNIAGFCCVTEVDMERQVVMLLSPQPRPLPPNALLLWSELQFMDNHT</sequence>
<organism>
    <name type="scientific">Drosophila persimilis</name>
    <name type="common">Fruit fly</name>
    <dbReference type="NCBI Taxonomy" id="7234"/>
    <lineage>
        <taxon>Eukaryota</taxon>
        <taxon>Metazoa</taxon>
        <taxon>Ecdysozoa</taxon>
        <taxon>Arthropoda</taxon>
        <taxon>Hexapoda</taxon>
        <taxon>Insecta</taxon>
        <taxon>Pterygota</taxon>
        <taxon>Neoptera</taxon>
        <taxon>Endopterygota</taxon>
        <taxon>Diptera</taxon>
        <taxon>Brachycera</taxon>
        <taxon>Muscomorpha</taxon>
        <taxon>Ephydroidea</taxon>
        <taxon>Drosophilidae</taxon>
        <taxon>Drosophila</taxon>
        <taxon>Sophophora</taxon>
    </lineage>
</organism>
<protein>
    <recommendedName>
        <fullName evidence="1">Protein CLP1 homolog</fullName>
    </recommendedName>
</protein>
<name>CLP1_DROPE</name>
<comment type="function">
    <text evidence="1">Required for endonucleolytic cleavage during polyadenylation-dependent pre-mRNA 3'-end formation.</text>
</comment>
<comment type="subcellular location">
    <subcellularLocation>
        <location evidence="1">Nucleus</location>
    </subcellularLocation>
</comment>
<comment type="similarity">
    <text evidence="1">Belongs to the Clp1 family. Clp1 subfamily.</text>
</comment>
<feature type="chain" id="PRO_0000375182" description="Protein CLP1 homolog">
    <location>
        <begin position="1"/>
        <end position="425"/>
    </location>
</feature>
<feature type="binding site" evidence="1">
    <location>
        <position position="18"/>
    </location>
    <ligand>
        <name>ATP</name>
        <dbReference type="ChEBI" id="CHEBI:30616"/>
    </ligand>
</feature>
<feature type="binding site" evidence="1">
    <location>
        <position position="59"/>
    </location>
    <ligand>
        <name>ATP</name>
        <dbReference type="ChEBI" id="CHEBI:30616"/>
    </ligand>
</feature>
<feature type="binding site" evidence="1">
    <location>
        <begin position="121"/>
        <end position="126"/>
    </location>
    <ligand>
        <name>ATP</name>
        <dbReference type="ChEBI" id="CHEBI:30616"/>
    </ligand>
</feature>
<dbReference type="EMBL" id="CH479183">
    <property type="protein sequence ID" value="EDW35706.1"/>
    <property type="molecule type" value="Genomic_DNA"/>
</dbReference>
<dbReference type="SMR" id="B4GGT6"/>
<dbReference type="STRING" id="7234.B4GGT6"/>
<dbReference type="EnsemblMetazoa" id="FBtr0182686">
    <property type="protein sequence ID" value="FBpp0181178"/>
    <property type="gene ID" value="FBgn0154675"/>
</dbReference>
<dbReference type="EnsemblMetazoa" id="XM_002017831.2">
    <property type="protein sequence ID" value="XP_002017867.1"/>
    <property type="gene ID" value="LOC6592646"/>
</dbReference>
<dbReference type="GeneID" id="6592646"/>
<dbReference type="KEGG" id="dpe:6592646"/>
<dbReference type="CTD" id="36494"/>
<dbReference type="eggNOG" id="KOG2749">
    <property type="taxonomic scope" value="Eukaryota"/>
</dbReference>
<dbReference type="HOGENOM" id="CLU_018195_1_0_1"/>
<dbReference type="OMA" id="VQYVNCH"/>
<dbReference type="OrthoDB" id="258143at2759"/>
<dbReference type="PhylomeDB" id="B4GGT6"/>
<dbReference type="Proteomes" id="UP000008744">
    <property type="component" value="Unassembled WGS sequence"/>
</dbReference>
<dbReference type="GO" id="GO:0005849">
    <property type="term" value="C:mRNA cleavage factor complex"/>
    <property type="evidence" value="ECO:0007669"/>
    <property type="project" value="InterPro"/>
</dbReference>
<dbReference type="GO" id="GO:0000214">
    <property type="term" value="C:tRNA-intron endonuclease complex"/>
    <property type="evidence" value="ECO:0000250"/>
    <property type="project" value="UniProtKB"/>
</dbReference>
<dbReference type="GO" id="GO:0005524">
    <property type="term" value="F:ATP binding"/>
    <property type="evidence" value="ECO:0007669"/>
    <property type="project" value="UniProtKB-UniRule"/>
</dbReference>
<dbReference type="GO" id="GO:0051731">
    <property type="term" value="F:polynucleotide 5'-hydroxyl-kinase activity"/>
    <property type="evidence" value="ECO:0007669"/>
    <property type="project" value="InterPro"/>
</dbReference>
<dbReference type="GO" id="GO:0031124">
    <property type="term" value="P:mRNA 3'-end processing"/>
    <property type="evidence" value="ECO:0007669"/>
    <property type="project" value="UniProtKB-UniRule"/>
</dbReference>
<dbReference type="GO" id="GO:0006388">
    <property type="term" value="P:tRNA splicing, via endonucleolytic cleavage and ligation"/>
    <property type="evidence" value="ECO:0000250"/>
    <property type="project" value="UniProtKB"/>
</dbReference>
<dbReference type="CDD" id="cd01983">
    <property type="entry name" value="SIMIBI"/>
    <property type="match status" value="1"/>
</dbReference>
<dbReference type="FunFam" id="2.40.30.330:FF:000001">
    <property type="entry name" value="Protein CLP1 homolog"/>
    <property type="match status" value="1"/>
</dbReference>
<dbReference type="FunFam" id="3.40.50.300:FF:000454">
    <property type="entry name" value="Protein CLP1 homolog"/>
    <property type="match status" value="1"/>
</dbReference>
<dbReference type="FunFam" id="2.60.120.1030:FF:000001">
    <property type="entry name" value="Protein CLP1 homolog 5"/>
    <property type="match status" value="1"/>
</dbReference>
<dbReference type="Gene3D" id="2.60.120.1030">
    <property type="entry name" value="Clp1, DNA binding domain"/>
    <property type="match status" value="1"/>
</dbReference>
<dbReference type="Gene3D" id="3.40.50.300">
    <property type="entry name" value="P-loop containing nucleotide triphosphate hydrolases"/>
    <property type="match status" value="1"/>
</dbReference>
<dbReference type="Gene3D" id="2.40.30.330">
    <property type="entry name" value="Pre-mRNA cleavage complex subunit Clp1, C-terminal domain"/>
    <property type="match status" value="1"/>
</dbReference>
<dbReference type="HAMAP" id="MF_03035">
    <property type="entry name" value="Clp1"/>
    <property type="match status" value="1"/>
</dbReference>
<dbReference type="InterPro" id="IPR028606">
    <property type="entry name" value="Clp1"/>
</dbReference>
<dbReference type="InterPro" id="IPR045116">
    <property type="entry name" value="Clp1/Grc3"/>
</dbReference>
<dbReference type="InterPro" id="IPR010655">
    <property type="entry name" value="Clp1_C"/>
</dbReference>
<dbReference type="InterPro" id="IPR038238">
    <property type="entry name" value="Clp1_C_sf"/>
</dbReference>
<dbReference type="InterPro" id="IPR032324">
    <property type="entry name" value="Clp1_N"/>
</dbReference>
<dbReference type="InterPro" id="IPR038239">
    <property type="entry name" value="Clp1_N_sf"/>
</dbReference>
<dbReference type="InterPro" id="IPR032319">
    <property type="entry name" value="CLP1_P"/>
</dbReference>
<dbReference type="InterPro" id="IPR027417">
    <property type="entry name" value="P-loop_NTPase"/>
</dbReference>
<dbReference type="PANTHER" id="PTHR12755">
    <property type="entry name" value="CLEAVAGE/POLYADENYLATION FACTOR IA SUBUNIT CLP1P"/>
    <property type="match status" value="1"/>
</dbReference>
<dbReference type="PANTHER" id="PTHR12755:SF6">
    <property type="entry name" value="POLYRIBONUCLEOTIDE 5'-HYDROXYL-KINASE CLP1"/>
    <property type="match status" value="1"/>
</dbReference>
<dbReference type="Pfam" id="PF06807">
    <property type="entry name" value="Clp1"/>
    <property type="match status" value="1"/>
</dbReference>
<dbReference type="Pfam" id="PF16573">
    <property type="entry name" value="CLP1_N"/>
    <property type="match status" value="1"/>
</dbReference>
<dbReference type="Pfam" id="PF16575">
    <property type="entry name" value="CLP1_P"/>
    <property type="match status" value="1"/>
</dbReference>
<dbReference type="SUPFAM" id="SSF52540">
    <property type="entry name" value="P-loop containing nucleoside triphosphate hydrolases"/>
    <property type="match status" value="1"/>
</dbReference>